<accession>Q5PDU4</accession>
<reference key="1">
    <citation type="journal article" date="2004" name="Nat. Genet.">
        <title>Comparison of genome degradation in Paratyphi A and Typhi, human-restricted serovars of Salmonella enterica that cause typhoid.</title>
        <authorList>
            <person name="McClelland M."/>
            <person name="Sanderson K.E."/>
            <person name="Clifton S.W."/>
            <person name="Latreille P."/>
            <person name="Porwollik S."/>
            <person name="Sabo A."/>
            <person name="Meyer R."/>
            <person name="Bieri T."/>
            <person name="Ozersky P."/>
            <person name="McLellan M."/>
            <person name="Harkins C.R."/>
            <person name="Wang C."/>
            <person name="Nguyen C."/>
            <person name="Berghoff A."/>
            <person name="Elliott G."/>
            <person name="Kohlberg S."/>
            <person name="Strong C."/>
            <person name="Du F."/>
            <person name="Carter J."/>
            <person name="Kremizki C."/>
            <person name="Layman D."/>
            <person name="Leonard S."/>
            <person name="Sun H."/>
            <person name="Fulton L."/>
            <person name="Nash W."/>
            <person name="Miner T."/>
            <person name="Minx P."/>
            <person name="Delehaunty K."/>
            <person name="Fronick C."/>
            <person name="Magrini V."/>
            <person name="Nhan M."/>
            <person name="Warren W."/>
            <person name="Florea L."/>
            <person name="Spieth J."/>
            <person name="Wilson R.K."/>
        </authorList>
    </citation>
    <scope>NUCLEOTIDE SEQUENCE [LARGE SCALE GENOMIC DNA]</scope>
    <source>
        <strain>ATCC 9150 / SARB42</strain>
    </source>
</reference>
<organism>
    <name type="scientific">Salmonella paratyphi A (strain ATCC 9150 / SARB42)</name>
    <dbReference type="NCBI Taxonomy" id="295319"/>
    <lineage>
        <taxon>Bacteria</taxon>
        <taxon>Pseudomonadati</taxon>
        <taxon>Pseudomonadota</taxon>
        <taxon>Gammaproteobacteria</taxon>
        <taxon>Enterobacterales</taxon>
        <taxon>Enterobacteriaceae</taxon>
        <taxon>Salmonella</taxon>
    </lineage>
</organism>
<comment type="function">
    <text evidence="1">Part of the energy-coupling factor (ECF) transporter complex CbiMNOQ involved in cobalt import. Presumably responsible for energy coupling to the transport system.</text>
</comment>
<comment type="pathway">
    <text evidence="1">Cofactor biosynthesis; adenosylcobalamin biosynthesis.</text>
</comment>
<comment type="subunit">
    <text evidence="1">Forms an energy-coupling factor (ECF) transporter complex composed of an ATP-binding protein (A component, CbiO), a transmembrane protein (T component, CbiQ) and 2 possible substrate-capture proteins (S components, CbiM and CbiN) of unknown stoichimetry.</text>
</comment>
<comment type="subcellular location">
    <subcellularLocation>
        <location evidence="1">Cell inner membrane</location>
        <topology evidence="1">Peripheral membrane protein</topology>
    </subcellularLocation>
</comment>
<comment type="similarity">
    <text evidence="1">Belongs to the ABC transporter superfamily. Cobalt importer (TC 3.A.1.18.1) family.</text>
</comment>
<keyword id="KW-0067">ATP-binding</keyword>
<keyword id="KW-0997">Cell inner membrane</keyword>
<keyword id="KW-1003">Cell membrane</keyword>
<keyword id="KW-0169">Cobalamin biosynthesis</keyword>
<keyword id="KW-0170">Cobalt</keyword>
<keyword id="KW-0171">Cobalt transport</keyword>
<keyword id="KW-0406">Ion transport</keyword>
<keyword id="KW-0472">Membrane</keyword>
<keyword id="KW-0547">Nucleotide-binding</keyword>
<keyword id="KW-1278">Translocase</keyword>
<keyword id="KW-0813">Transport</keyword>
<protein>
    <recommendedName>
        <fullName evidence="1">Cobalt import ATP-binding protein CbiO</fullName>
        <ecNumber evidence="1">7.-.-.-</ecNumber>
    </recommendedName>
    <alternativeName>
        <fullName evidence="1">Energy-coupling factor transporter ATP-binding protein CbiO</fullName>
        <shortName evidence="1">ECF transporter A component CbiO</shortName>
    </alternativeName>
</protein>
<dbReference type="EC" id="7.-.-.-" evidence="1"/>
<dbReference type="EMBL" id="CP000026">
    <property type="protein sequence ID" value="AAV76839.1"/>
    <property type="molecule type" value="Genomic_DNA"/>
</dbReference>
<dbReference type="RefSeq" id="WP_000881534.1">
    <property type="nucleotide sequence ID" value="NC_006511.1"/>
</dbReference>
<dbReference type="SMR" id="Q5PDU4"/>
<dbReference type="KEGG" id="spt:SPA0851"/>
<dbReference type="HOGENOM" id="CLU_000604_1_22_6"/>
<dbReference type="UniPathway" id="UPA00148"/>
<dbReference type="Proteomes" id="UP000008185">
    <property type="component" value="Chromosome"/>
</dbReference>
<dbReference type="GO" id="GO:0043190">
    <property type="term" value="C:ATP-binding cassette (ABC) transporter complex"/>
    <property type="evidence" value="ECO:0007669"/>
    <property type="project" value="TreeGrafter"/>
</dbReference>
<dbReference type="GO" id="GO:0005524">
    <property type="term" value="F:ATP binding"/>
    <property type="evidence" value="ECO:0007669"/>
    <property type="project" value="UniProtKB-KW"/>
</dbReference>
<dbReference type="GO" id="GO:0016887">
    <property type="term" value="F:ATP hydrolysis activity"/>
    <property type="evidence" value="ECO:0007669"/>
    <property type="project" value="InterPro"/>
</dbReference>
<dbReference type="GO" id="GO:0042626">
    <property type="term" value="F:ATPase-coupled transmembrane transporter activity"/>
    <property type="evidence" value="ECO:0007669"/>
    <property type="project" value="TreeGrafter"/>
</dbReference>
<dbReference type="GO" id="GO:0009236">
    <property type="term" value="P:cobalamin biosynthetic process"/>
    <property type="evidence" value="ECO:0007669"/>
    <property type="project" value="UniProtKB-UniPathway"/>
</dbReference>
<dbReference type="GO" id="GO:0006824">
    <property type="term" value="P:cobalt ion transport"/>
    <property type="evidence" value="ECO:0007669"/>
    <property type="project" value="UniProtKB-KW"/>
</dbReference>
<dbReference type="CDD" id="cd03225">
    <property type="entry name" value="ABC_cobalt_CbiO_domain1"/>
    <property type="match status" value="1"/>
</dbReference>
<dbReference type="FunFam" id="3.40.50.300:FF:000224">
    <property type="entry name" value="Energy-coupling factor transporter ATP-binding protein EcfA"/>
    <property type="match status" value="1"/>
</dbReference>
<dbReference type="Gene3D" id="3.40.50.300">
    <property type="entry name" value="P-loop containing nucleotide triphosphate hydrolases"/>
    <property type="match status" value="1"/>
</dbReference>
<dbReference type="InterPro" id="IPR003593">
    <property type="entry name" value="AAA+_ATPase"/>
</dbReference>
<dbReference type="InterPro" id="IPR003439">
    <property type="entry name" value="ABC_transporter-like_ATP-bd"/>
</dbReference>
<dbReference type="InterPro" id="IPR017871">
    <property type="entry name" value="ABC_transporter-like_CS"/>
</dbReference>
<dbReference type="InterPro" id="IPR015856">
    <property type="entry name" value="ABC_transpr_CbiO/EcfA_su"/>
</dbReference>
<dbReference type="InterPro" id="IPR005876">
    <property type="entry name" value="Co_trans_ATP-bd"/>
</dbReference>
<dbReference type="InterPro" id="IPR050095">
    <property type="entry name" value="ECF_ABC_transporter_ATP-bd"/>
</dbReference>
<dbReference type="InterPro" id="IPR027417">
    <property type="entry name" value="P-loop_NTPase"/>
</dbReference>
<dbReference type="NCBIfam" id="TIGR01166">
    <property type="entry name" value="cbiO"/>
    <property type="match status" value="1"/>
</dbReference>
<dbReference type="NCBIfam" id="NF010159">
    <property type="entry name" value="PRK13638.1"/>
    <property type="match status" value="1"/>
</dbReference>
<dbReference type="PANTHER" id="PTHR43553:SF24">
    <property type="entry name" value="ENERGY-COUPLING FACTOR TRANSPORTER ATP-BINDING PROTEIN ECFA1"/>
    <property type="match status" value="1"/>
</dbReference>
<dbReference type="PANTHER" id="PTHR43553">
    <property type="entry name" value="HEAVY METAL TRANSPORTER"/>
    <property type="match status" value="1"/>
</dbReference>
<dbReference type="Pfam" id="PF00005">
    <property type="entry name" value="ABC_tran"/>
    <property type="match status" value="1"/>
</dbReference>
<dbReference type="SMART" id="SM00382">
    <property type="entry name" value="AAA"/>
    <property type="match status" value="1"/>
</dbReference>
<dbReference type="SUPFAM" id="SSF52540">
    <property type="entry name" value="P-loop containing nucleoside triphosphate hydrolases"/>
    <property type="match status" value="1"/>
</dbReference>
<dbReference type="PROSITE" id="PS00211">
    <property type="entry name" value="ABC_TRANSPORTER_1"/>
    <property type="match status" value="1"/>
</dbReference>
<dbReference type="PROSITE" id="PS50893">
    <property type="entry name" value="ABC_TRANSPORTER_2"/>
    <property type="match status" value="1"/>
</dbReference>
<dbReference type="PROSITE" id="PS51246">
    <property type="entry name" value="CBIO"/>
    <property type="match status" value="1"/>
</dbReference>
<feature type="chain" id="PRO_0000287980" description="Cobalt import ATP-binding protein CbiO">
    <location>
        <begin position="1"/>
        <end position="271"/>
    </location>
</feature>
<feature type="domain" description="ABC transporter" evidence="1">
    <location>
        <begin position="2"/>
        <end position="236"/>
    </location>
</feature>
<feature type="binding site" evidence="1">
    <location>
        <begin position="34"/>
        <end position="41"/>
    </location>
    <ligand>
        <name>ATP</name>
        <dbReference type="ChEBI" id="CHEBI:30616"/>
    </ligand>
</feature>
<name>CBIO_SALPA</name>
<sequence length="271" mass="30132">MLATSDLWFRYQDEPVLKGLNLDFSLSPVTGLVGANGCGKSTLFMNLSGLLRPQKGAVLWQGKPLDYSKRGLLALRQQVATVFQDPEQQIFYTDIDSDIAFSLRNLGVPEAEITRRVDEALTLVDAQHFRHQPIQCLSHGQKKRVAIAGALVLQARYLLLDEPTAGLDPAGRTQMIAIIRRIVAQGNHVIISSHDIDLIYEISDAVYVLRQGQILMHGAPGEVFACTEAMEHAGLTQPWLVKLHTQLGLPLCKTETEFFHRMQKCAFKEAS</sequence>
<proteinExistence type="inferred from homology"/>
<evidence type="ECO:0000255" key="1">
    <source>
        <dbReference type="HAMAP-Rule" id="MF_01710"/>
    </source>
</evidence>
<gene>
    <name evidence="1" type="primary">cbiO</name>
    <name type="ordered locus">SPA0851</name>
</gene>